<organismHost>
    <name type="scientific">Aedimorphus</name>
    <dbReference type="NCBI Taxonomy" id="53540"/>
</organismHost>
<organismHost>
    <name type="scientific">Diceromyia</name>
    <dbReference type="NCBI Taxonomy" id="53539"/>
</organismHost>
<organismHost>
    <name type="scientific">Erythrocebus patas</name>
    <name type="common">Red guenon</name>
    <name type="synonym">Cercopithecus patas</name>
    <dbReference type="NCBI Taxonomy" id="9538"/>
</organismHost>
<organismHost>
    <name type="scientific">Homo sapiens</name>
    <name type="common">Human</name>
    <dbReference type="NCBI Taxonomy" id="9606"/>
</organismHost>
<organismHost>
    <name type="scientific">Stegomyia</name>
    <dbReference type="NCBI Taxonomy" id="53541"/>
</organismHost>
<reference key="1">
    <citation type="journal article" date="1990" name="Nucleic Acids Res.">
        <title>Nucleotide sequence of the envelope glycoprotein gene of a dengue-2 virus isolated during an epidemic of benign dengue fever in Tonga in 1974.</title>
        <authorList>
            <person name="Chen W."/>
            <person name="Maguire T."/>
        </authorList>
    </citation>
    <scope>NUCLEOTIDE SEQUENCE [GENOMIC RNA] OF 1-495</scope>
</reference>
<reference key="2">
    <citation type="submission" date="1991-03" db="EMBL/GenBank/DDBJ databases">
        <authorList>
            <person name="Qu X."/>
            <person name="Chen W."/>
            <person name="Maguire T."/>
        </authorList>
    </citation>
    <scope>NUCLEOTIDE SEQUENCE [GENOMIC RNA] OF 496-1683</scope>
</reference>
<reference key="3">
    <citation type="journal article" date="2004" name="Structure">
        <title>Conformational changes of the flavivirus E glycoprotein.</title>
        <authorList>
            <person name="Zhang Y."/>
            <person name="Zhang W."/>
            <person name="Ogata S."/>
            <person name="Clements D."/>
            <person name="Strauss J.H."/>
            <person name="Baker T.S."/>
            <person name="Kuhn R.J."/>
            <person name="Rossmann M.G."/>
        </authorList>
    </citation>
    <scope>STRUCTURE BY ELECTRON MICROSCOPY (12.5 ANGSTROMS) OF 1-395</scope>
    <scope>X-RAY CRYSTALLOGRAPHY (2.61 ANGSTROMS) OF 1-395</scope>
</reference>
<dbReference type="EC" id="3.4.21.91"/>
<dbReference type="EC" id="3.6.1.15"/>
<dbReference type="EC" id="3.6.4.13"/>
<dbReference type="EMBL" id="X54319">
    <property type="protein sequence ID" value="CAA38217.1"/>
    <property type="molecule type" value="Genomic_RNA"/>
</dbReference>
<dbReference type="EMBL" id="X57469">
    <property type="protein sequence ID" value="CAA40705.1"/>
    <property type="molecule type" value="Genomic_RNA"/>
</dbReference>
<dbReference type="EMBL" id="X57468">
    <property type="protein sequence ID" value="CAA40704.1"/>
    <property type="molecule type" value="Genomic_RNA"/>
</dbReference>
<dbReference type="PIR" id="PQ0507">
    <property type="entry name" value="PQ0507"/>
</dbReference>
<dbReference type="PIR" id="S11482">
    <property type="entry name" value="S11482"/>
</dbReference>
<dbReference type="PDB" id="1TG8">
    <property type="method" value="X-ray"/>
    <property type="resolution" value="2.61 A"/>
    <property type="chains" value="A=1-395"/>
</dbReference>
<dbReference type="PDB" id="1TGE">
    <property type="method" value="EM"/>
    <property type="resolution" value="12.50 A"/>
    <property type="chains" value="A/B/C=1-395"/>
</dbReference>
<dbReference type="PDBsum" id="1TG8"/>
<dbReference type="PDBsum" id="1TGE"/>
<dbReference type="BMRB" id="P27914"/>
<dbReference type="SMR" id="P27914"/>
<dbReference type="BindingDB" id="P27914"/>
<dbReference type="DrugBank" id="DB04473">
    <property type="generic name" value="alpha-L-fucose"/>
</dbReference>
<dbReference type="MEROPS" id="S07.001"/>
<dbReference type="EvolutionaryTrace" id="P27914"/>
<dbReference type="GO" id="GO:0005576">
    <property type="term" value="C:extracellular region"/>
    <property type="evidence" value="ECO:0007669"/>
    <property type="project" value="UniProtKB-SubCell"/>
</dbReference>
<dbReference type="GO" id="GO:0044167">
    <property type="term" value="C:host cell endoplasmic reticulum membrane"/>
    <property type="evidence" value="ECO:0007669"/>
    <property type="project" value="UniProtKB-SubCell"/>
</dbReference>
<dbReference type="GO" id="GO:0016020">
    <property type="term" value="C:membrane"/>
    <property type="evidence" value="ECO:0007669"/>
    <property type="project" value="UniProtKB-KW"/>
</dbReference>
<dbReference type="GO" id="GO:0019031">
    <property type="term" value="C:viral envelope"/>
    <property type="evidence" value="ECO:0007669"/>
    <property type="project" value="UniProtKB-KW"/>
</dbReference>
<dbReference type="GO" id="GO:0019013">
    <property type="term" value="C:viral nucleocapsid"/>
    <property type="evidence" value="ECO:0007669"/>
    <property type="project" value="UniProtKB-KW"/>
</dbReference>
<dbReference type="GO" id="GO:0055036">
    <property type="term" value="C:virion membrane"/>
    <property type="evidence" value="ECO:0007669"/>
    <property type="project" value="UniProtKB-SubCell"/>
</dbReference>
<dbReference type="GO" id="GO:0005524">
    <property type="term" value="F:ATP binding"/>
    <property type="evidence" value="ECO:0007669"/>
    <property type="project" value="UniProtKB-KW"/>
</dbReference>
<dbReference type="GO" id="GO:0016887">
    <property type="term" value="F:ATP hydrolysis activity"/>
    <property type="evidence" value="ECO:0007669"/>
    <property type="project" value="RHEA"/>
</dbReference>
<dbReference type="GO" id="GO:0003725">
    <property type="term" value="F:double-stranded RNA binding"/>
    <property type="evidence" value="ECO:0007669"/>
    <property type="project" value="InterPro"/>
</dbReference>
<dbReference type="GO" id="GO:0046983">
    <property type="term" value="F:protein dimerization activity"/>
    <property type="evidence" value="ECO:0007669"/>
    <property type="project" value="InterPro"/>
</dbReference>
<dbReference type="GO" id="GO:0003724">
    <property type="term" value="F:RNA helicase activity"/>
    <property type="evidence" value="ECO:0007669"/>
    <property type="project" value="UniProtKB-EC"/>
</dbReference>
<dbReference type="GO" id="GO:0008236">
    <property type="term" value="F:serine-type peptidase activity"/>
    <property type="evidence" value="ECO:0007669"/>
    <property type="project" value="UniProtKB-KW"/>
</dbReference>
<dbReference type="GO" id="GO:0075512">
    <property type="term" value="P:clathrin-dependent endocytosis of virus by host cell"/>
    <property type="evidence" value="ECO:0007669"/>
    <property type="project" value="UniProtKB-KW"/>
</dbReference>
<dbReference type="GO" id="GO:0039654">
    <property type="term" value="P:fusion of virus membrane with host endosome membrane"/>
    <property type="evidence" value="ECO:0007669"/>
    <property type="project" value="UniProtKB-KW"/>
</dbReference>
<dbReference type="GO" id="GO:0006508">
    <property type="term" value="P:proteolysis"/>
    <property type="evidence" value="ECO:0007669"/>
    <property type="project" value="UniProtKB-KW"/>
</dbReference>
<dbReference type="GO" id="GO:0052170">
    <property type="term" value="P:symbiont-mediated suppression of host innate immune response"/>
    <property type="evidence" value="ECO:0007669"/>
    <property type="project" value="UniProtKB-KW"/>
</dbReference>
<dbReference type="GO" id="GO:0019062">
    <property type="term" value="P:virion attachment to host cell"/>
    <property type="evidence" value="ECO:0007669"/>
    <property type="project" value="UniProtKB-KW"/>
</dbReference>
<dbReference type="CDD" id="cd17931">
    <property type="entry name" value="DEXHc_viral_Ns3"/>
    <property type="match status" value="1"/>
</dbReference>
<dbReference type="CDD" id="cd12149">
    <property type="entry name" value="Flavi_E_C"/>
    <property type="match status" value="1"/>
</dbReference>
<dbReference type="CDD" id="cd18806">
    <property type="entry name" value="SF2_C_viral"/>
    <property type="match status" value="1"/>
</dbReference>
<dbReference type="FunFam" id="1.20.1280.260:FF:000001">
    <property type="entry name" value="Envelope glycoprotein"/>
    <property type="match status" value="1"/>
</dbReference>
<dbReference type="FunFam" id="2.60.40.350:FF:000001">
    <property type="entry name" value="Envelope glycoprotein"/>
    <property type="match status" value="1"/>
</dbReference>
<dbReference type="FunFam" id="3.40.50.300:FF:000763">
    <property type="entry name" value="Genome polyprotein"/>
    <property type="match status" value="1"/>
</dbReference>
<dbReference type="Gene3D" id="1.20.1280.260">
    <property type="match status" value="1"/>
</dbReference>
<dbReference type="Gene3D" id="2.40.10.120">
    <property type="match status" value="1"/>
</dbReference>
<dbReference type="Gene3D" id="2.60.40.350">
    <property type="match status" value="1"/>
</dbReference>
<dbReference type="Gene3D" id="3.40.50.300">
    <property type="entry name" value="P-loop containing nucleotide triphosphate hydrolases"/>
    <property type="match status" value="2"/>
</dbReference>
<dbReference type="Gene3D" id="2.60.98.10">
    <property type="entry name" value="Tick-borne Encephalitis virus Glycoprotein, domain 1"/>
    <property type="match status" value="1"/>
</dbReference>
<dbReference type="Gene3D" id="3.30.67.10">
    <property type="entry name" value="Viral Envelope Glycoprotein, domain 2"/>
    <property type="match status" value="1"/>
</dbReference>
<dbReference type="Gene3D" id="3.30.387.10">
    <property type="entry name" value="Viral Envelope Glycoprotein, domain 3"/>
    <property type="match status" value="1"/>
</dbReference>
<dbReference type="InterPro" id="IPR013755">
    <property type="entry name" value="Flav_gly_cen_dom_subdom1"/>
</dbReference>
<dbReference type="InterPro" id="IPR011492">
    <property type="entry name" value="Flavi_DEAD"/>
</dbReference>
<dbReference type="InterPro" id="IPR027287">
    <property type="entry name" value="Flavi_E_Ig-like"/>
</dbReference>
<dbReference type="InterPro" id="IPR026470">
    <property type="entry name" value="Flavi_E_Stem/Anchor_dom"/>
</dbReference>
<dbReference type="InterPro" id="IPR038345">
    <property type="entry name" value="Flavi_E_Stem/Anchor_dom_sf"/>
</dbReference>
<dbReference type="InterPro" id="IPR011998">
    <property type="entry name" value="Flavi_Glycoprot_E_cen/dimer"/>
</dbReference>
<dbReference type="InterPro" id="IPR001157">
    <property type="entry name" value="Flavi_NS1"/>
</dbReference>
<dbReference type="InterPro" id="IPR000752">
    <property type="entry name" value="Flavi_NS2A"/>
</dbReference>
<dbReference type="InterPro" id="IPR001850">
    <property type="entry name" value="Flavi_NS3_S7"/>
</dbReference>
<dbReference type="InterPro" id="IPR000336">
    <property type="entry name" value="Flavivir/Alphavir_Ig-like_sf"/>
</dbReference>
<dbReference type="InterPro" id="IPR036253">
    <property type="entry name" value="Glycoprot_cen/dimer_sf"/>
</dbReference>
<dbReference type="InterPro" id="IPR038055">
    <property type="entry name" value="Glycoprot_E_dimer_dom"/>
</dbReference>
<dbReference type="InterPro" id="IPR013756">
    <property type="entry name" value="GlyE_cen_dom_subdom2"/>
</dbReference>
<dbReference type="InterPro" id="IPR014001">
    <property type="entry name" value="Helicase_ATP-bd"/>
</dbReference>
<dbReference type="InterPro" id="IPR001650">
    <property type="entry name" value="Helicase_C-like"/>
</dbReference>
<dbReference type="InterPro" id="IPR014756">
    <property type="entry name" value="Ig_E-set"/>
</dbReference>
<dbReference type="InterPro" id="IPR049486">
    <property type="entry name" value="NS3-hel_C_flaviviridae"/>
</dbReference>
<dbReference type="InterPro" id="IPR027417">
    <property type="entry name" value="P-loop_NTPase"/>
</dbReference>
<dbReference type="InterPro" id="IPR009003">
    <property type="entry name" value="Peptidase_S1_PA"/>
</dbReference>
<dbReference type="NCBIfam" id="TIGR04240">
    <property type="entry name" value="flavi_E_stem"/>
    <property type="match status" value="1"/>
</dbReference>
<dbReference type="Pfam" id="PF20907">
    <property type="entry name" value="Flav_NS3-hel_C"/>
    <property type="match status" value="1"/>
</dbReference>
<dbReference type="Pfam" id="PF07652">
    <property type="entry name" value="Flavi_DEAD"/>
    <property type="match status" value="1"/>
</dbReference>
<dbReference type="Pfam" id="PF21659">
    <property type="entry name" value="Flavi_E_stem"/>
    <property type="match status" value="1"/>
</dbReference>
<dbReference type="Pfam" id="PF02832">
    <property type="entry name" value="Flavi_glycop_C"/>
    <property type="match status" value="1"/>
</dbReference>
<dbReference type="Pfam" id="PF00869">
    <property type="entry name" value="Flavi_glycoprot"/>
    <property type="match status" value="1"/>
</dbReference>
<dbReference type="Pfam" id="PF00948">
    <property type="entry name" value="Flavi_NS1"/>
    <property type="match status" value="1"/>
</dbReference>
<dbReference type="Pfam" id="PF01005">
    <property type="entry name" value="Flavi_NS2A"/>
    <property type="match status" value="1"/>
</dbReference>
<dbReference type="Pfam" id="PF00949">
    <property type="entry name" value="Peptidase_S7"/>
    <property type="match status" value="1"/>
</dbReference>
<dbReference type="SMART" id="SM00487">
    <property type="entry name" value="DEXDc"/>
    <property type="match status" value="1"/>
</dbReference>
<dbReference type="SMART" id="SM00490">
    <property type="entry name" value="HELICc"/>
    <property type="match status" value="1"/>
</dbReference>
<dbReference type="SUPFAM" id="SSF81296">
    <property type="entry name" value="E set domains"/>
    <property type="match status" value="1"/>
</dbReference>
<dbReference type="SUPFAM" id="SSF52540">
    <property type="entry name" value="P-loop containing nucleoside triphosphate hydrolases"/>
    <property type="match status" value="2"/>
</dbReference>
<dbReference type="SUPFAM" id="SSF50494">
    <property type="entry name" value="Trypsin-like serine proteases"/>
    <property type="match status" value="1"/>
</dbReference>
<dbReference type="SUPFAM" id="SSF56983">
    <property type="entry name" value="Viral glycoprotein, central and dimerisation domains"/>
    <property type="match status" value="1"/>
</dbReference>
<dbReference type="PROSITE" id="PS51528">
    <property type="entry name" value="FLAVIVIRUS_NS3PRO"/>
    <property type="match status" value="1"/>
</dbReference>
<dbReference type="PROSITE" id="PS51192">
    <property type="entry name" value="HELICASE_ATP_BIND_1"/>
    <property type="match status" value="1"/>
</dbReference>
<dbReference type="PROSITE" id="PS51194">
    <property type="entry name" value="HELICASE_CTER"/>
    <property type="match status" value="1"/>
</dbReference>
<accession>P27914</accession>
<feature type="chain" id="PRO_0000405219" description="Genome polyprotein">
    <location>
        <begin position="1" status="less than"/>
        <end position="1683" status="greater than"/>
    </location>
</feature>
<feature type="chain" id="PRO_0000037980" description="Envelope protein E" evidence="5">
    <location>
        <begin position="1"/>
        <end position="495"/>
    </location>
</feature>
<feature type="chain" id="PRO_0000037981" description="Non-structural protein 1" evidence="5">
    <location>
        <begin position="496"/>
        <end position="847"/>
    </location>
</feature>
<feature type="chain" id="PRO_0000308290" description="Non-structural protein 2A" evidence="5">
    <location>
        <begin position="848"/>
        <end position="1065"/>
    </location>
</feature>
<feature type="chain" id="PRO_0000037983" description="Serine protease NS3" evidence="5">
    <location>
        <begin position="1066"/>
        <end position="1683"/>
    </location>
</feature>
<feature type="topological domain" description="Extracellular" evidence="7">
    <location>
        <begin position="1" status="less than"/>
        <end position="445"/>
    </location>
</feature>
<feature type="transmembrane region" description="Helical" evidence="7">
    <location>
        <begin position="446"/>
        <end position="466"/>
    </location>
</feature>
<feature type="topological domain" description="Cytoplasmic" evidence="7">
    <location>
        <begin position="467"/>
        <end position="472"/>
    </location>
</feature>
<feature type="transmembrane region" description="Helical" evidence="7">
    <location>
        <begin position="473"/>
        <end position="493"/>
    </location>
</feature>
<feature type="topological domain" description="Extracellular" evidence="7">
    <location>
        <begin position="494"/>
        <end position="915"/>
    </location>
</feature>
<feature type="transmembrane region" description="Helical" evidence="7">
    <location>
        <begin position="916"/>
        <end position="940"/>
    </location>
</feature>
<feature type="topological domain" description="Cytoplasmic" evidence="7">
    <location>
        <begin position="941"/>
        <end position="946"/>
    </location>
</feature>
<feature type="transmembrane region" description="Helical" evidence="7">
    <location>
        <begin position="947"/>
        <end position="965"/>
    </location>
</feature>
<feature type="topological domain" description="Lumenal" evidence="7">
    <location>
        <begin position="966"/>
        <end position="989"/>
    </location>
</feature>
<feature type="transmembrane region" description="Helical" evidence="7">
    <location>
        <begin position="990"/>
        <end position="1010"/>
    </location>
</feature>
<feature type="topological domain" description="Cytoplasmic" evidence="7">
    <location>
        <position position="1011"/>
    </location>
</feature>
<feature type="transmembrane region" description="Helical" evidence="7">
    <location>
        <begin position="1012"/>
        <end position="1030"/>
    </location>
</feature>
<feature type="topological domain" description="Lumenal" evidence="7">
    <location>
        <begin position="1031"/>
        <end position="1037"/>
    </location>
</feature>
<feature type="transmembrane region" description="Helical" evidence="7">
    <location>
        <begin position="1038"/>
        <end position="1058"/>
    </location>
</feature>
<feature type="topological domain" description="Cytoplasmic" evidence="7">
    <location>
        <begin position="1059"/>
        <end position="1683" status="greater than"/>
    </location>
</feature>
<feature type="domain" description="Peptidase S7" evidence="11">
    <location>
        <begin position="1066"/>
        <end position="1243"/>
    </location>
</feature>
<feature type="domain" description="Helicase ATP-binding" evidence="8">
    <location>
        <begin position="1245"/>
        <end position="1401"/>
    </location>
</feature>
<feature type="domain" description="Helicase C-terminal" evidence="9">
    <location>
        <begin position="1411"/>
        <end position="1582"/>
    </location>
</feature>
<feature type="region of interest" description="Fusion peptide" evidence="2">
    <location>
        <begin position="98"/>
        <end position="111"/>
    </location>
</feature>
<feature type="region of interest" description="Important for RNA-binding" evidence="3">
    <location>
        <begin position="1249"/>
        <end position="1252"/>
    </location>
</feature>
<feature type="short sequence motif" description="DEAH box" evidence="8">
    <location>
        <begin position="1349"/>
        <end position="1352"/>
    </location>
</feature>
<feature type="active site" description="Charge relay system; for serine protease NS3 activity" evidence="11">
    <location>
        <position position="1116"/>
    </location>
</feature>
<feature type="active site" description="Charge relay system; for serine protease NS3 activity" evidence="11">
    <location>
        <position position="1140"/>
    </location>
</feature>
<feature type="active site" description="Charge relay system; for serine protease NS3 activity" evidence="11">
    <location>
        <position position="1200"/>
    </location>
</feature>
<feature type="binding site" evidence="8">
    <location>
        <begin position="1258"/>
        <end position="1265"/>
    </location>
    <ligand>
        <name>ATP</name>
        <dbReference type="ChEBI" id="CHEBI:30616"/>
    </ligand>
</feature>
<feature type="site" description="Cleavage; by host signal peptidase" evidence="5">
    <location>
        <begin position="495"/>
        <end position="496"/>
    </location>
</feature>
<feature type="site" description="Cleavage; by host" evidence="5">
    <location>
        <begin position="847"/>
        <end position="848"/>
    </location>
</feature>
<feature type="site" description="Cleavage; by autolysis" evidence="5">
    <location>
        <begin position="1065"/>
        <end position="1066"/>
    </location>
</feature>
<feature type="site" description="Involved in NS3 ATPase and RTPase activities" evidence="1">
    <location>
        <position position="1522"/>
    </location>
</feature>
<feature type="site" description="Involved in NS3 ATPase and RTPase activities" evidence="1">
    <location>
        <position position="1525"/>
    </location>
</feature>
<feature type="glycosylation site" description="N-linked (GlcNAc...) asparagine; by host" evidence="7">
    <location>
        <position position="67"/>
    </location>
</feature>
<feature type="glycosylation site" description="N-linked (GlcNAc...) asparagine; by host" evidence="7">
    <location>
        <position position="153"/>
    </location>
</feature>
<feature type="glycosylation site" description="N-linked (GlcNAc...) asparagine; by host" evidence="7">
    <location>
        <position position="702"/>
    </location>
</feature>
<feature type="disulfide bond" evidence="4">
    <location>
        <begin position="3"/>
        <end position="30"/>
    </location>
</feature>
<feature type="disulfide bond" evidence="4">
    <location>
        <begin position="60"/>
        <end position="121"/>
    </location>
</feature>
<feature type="disulfide bond" evidence="4">
    <location>
        <begin position="74"/>
        <end position="105"/>
    </location>
</feature>
<feature type="disulfide bond" evidence="4">
    <location>
        <begin position="92"/>
        <end position="116"/>
    </location>
</feature>
<feature type="disulfide bond" evidence="4">
    <location>
        <begin position="185"/>
        <end position="285"/>
    </location>
</feature>
<feature type="disulfide bond" evidence="4">
    <location>
        <begin position="302"/>
        <end position="333"/>
    </location>
</feature>
<feature type="disulfide bond" evidence="4">
    <location>
        <begin position="499"/>
        <end position="510"/>
    </location>
</feature>
<feature type="disulfide bond" evidence="4">
    <location>
        <begin position="550"/>
        <end position="638"/>
    </location>
</feature>
<feature type="disulfide bond" evidence="4">
    <location>
        <begin position="674"/>
        <end position="718"/>
    </location>
</feature>
<feature type="disulfide bond" evidence="4">
    <location>
        <begin position="775"/>
        <end position="824"/>
    </location>
</feature>
<feature type="disulfide bond" evidence="4">
    <location>
        <begin position="786"/>
        <end position="808"/>
    </location>
</feature>
<feature type="disulfide bond" evidence="4">
    <location>
        <begin position="807"/>
        <end position="811"/>
    </location>
</feature>
<feature type="non-consecutive residues" evidence="12">
    <location>
        <begin position="1065"/>
        <end position="1066"/>
    </location>
</feature>
<feature type="non-terminal residue">
    <location>
        <position position="1"/>
    </location>
</feature>
<feature type="non-terminal residue">
    <location>
        <position position="1683"/>
    </location>
</feature>
<feature type="turn" evidence="13">
    <location>
        <begin position="2"/>
        <end position="5"/>
    </location>
</feature>
<feature type="strand" evidence="13">
    <location>
        <begin position="7"/>
        <end position="13"/>
    </location>
</feature>
<feature type="strand" evidence="13">
    <location>
        <begin position="20"/>
        <end position="24"/>
    </location>
</feature>
<feature type="strand" evidence="13">
    <location>
        <begin position="30"/>
        <end position="34"/>
    </location>
</feature>
<feature type="strand" evidence="13">
    <location>
        <begin position="36"/>
        <end position="38"/>
    </location>
</feature>
<feature type="strand" evidence="13">
    <location>
        <begin position="41"/>
        <end position="50"/>
    </location>
</feature>
<feature type="strand" evidence="13">
    <location>
        <begin position="55"/>
        <end position="72"/>
    </location>
</feature>
<feature type="strand" evidence="13">
    <location>
        <begin position="75"/>
        <end position="77"/>
    </location>
</feature>
<feature type="helix" evidence="13">
    <location>
        <begin position="83"/>
        <end position="85"/>
    </location>
</feature>
<feature type="strand" evidence="13">
    <location>
        <begin position="90"/>
        <end position="100"/>
    </location>
</feature>
<feature type="helix" evidence="13">
    <location>
        <begin position="101"/>
        <end position="103"/>
    </location>
</feature>
<feature type="strand" evidence="13">
    <location>
        <begin position="109"/>
        <end position="128"/>
    </location>
</feature>
<feature type="strand" evidence="13">
    <location>
        <begin position="135"/>
        <end position="143"/>
    </location>
</feature>
<feature type="turn" evidence="13">
    <location>
        <begin position="148"/>
        <end position="152"/>
    </location>
</feature>
<feature type="strand" evidence="13">
    <location>
        <begin position="159"/>
        <end position="164"/>
    </location>
</feature>
<feature type="strand" evidence="13">
    <location>
        <begin position="171"/>
        <end position="175"/>
    </location>
</feature>
<feature type="turn" evidence="13">
    <location>
        <begin position="176"/>
        <end position="178"/>
    </location>
</feature>
<feature type="strand" evidence="13">
    <location>
        <begin position="179"/>
        <end position="186"/>
    </location>
</feature>
<feature type="helix" evidence="13">
    <location>
        <begin position="193"/>
        <end position="195"/>
    </location>
</feature>
<feature type="strand" evidence="13">
    <location>
        <begin position="196"/>
        <end position="201"/>
    </location>
</feature>
<feature type="strand" evidence="13">
    <location>
        <begin position="204"/>
        <end position="209"/>
    </location>
</feature>
<feature type="helix" evidence="13">
    <location>
        <begin position="210"/>
        <end position="214"/>
    </location>
</feature>
<feature type="strand" evidence="13">
    <location>
        <begin position="220"/>
        <end position="222"/>
    </location>
</feature>
<feature type="helix" evidence="13">
    <location>
        <begin position="234"/>
        <end position="237"/>
    </location>
</feature>
<feature type="strand" evidence="13">
    <location>
        <begin position="238"/>
        <end position="241"/>
    </location>
</feature>
<feature type="strand" evidence="13">
    <location>
        <begin position="249"/>
        <end position="252"/>
    </location>
</feature>
<feature type="helix" evidence="13">
    <location>
        <begin position="257"/>
        <end position="263"/>
    </location>
</feature>
<feature type="turn" evidence="13">
    <location>
        <begin position="264"/>
        <end position="266"/>
    </location>
</feature>
<feature type="strand" evidence="13">
    <location>
        <begin position="273"/>
        <end position="276"/>
    </location>
</feature>
<feature type="strand" evidence="13">
    <location>
        <begin position="284"/>
        <end position="288"/>
    </location>
</feature>
<feature type="strand" evidence="13">
    <location>
        <begin position="306"/>
        <end position="310"/>
    </location>
</feature>
<feature type="strand" evidence="13">
    <location>
        <begin position="320"/>
        <end position="326"/>
    </location>
</feature>
<feature type="strand" evidence="13">
    <location>
        <begin position="332"/>
        <end position="334"/>
    </location>
</feature>
<feature type="strand" evidence="13">
    <location>
        <begin position="337"/>
        <end position="340"/>
    </location>
</feature>
<feature type="strand" evidence="13">
    <location>
        <begin position="346"/>
        <end position="353"/>
    </location>
</feature>
<feature type="strand" evidence="13">
    <location>
        <begin position="365"/>
        <end position="370"/>
    </location>
</feature>
<feature type="strand" evidence="13">
    <location>
        <begin position="373"/>
        <end position="381"/>
    </location>
</feature>
<feature type="strand" evidence="13">
    <location>
        <begin position="383"/>
        <end position="385"/>
    </location>
</feature>
<feature type="strand" evidence="13">
    <location>
        <begin position="387"/>
        <end position="393"/>
    </location>
</feature>
<protein>
    <recommendedName>
        <fullName>Genome polyprotein</fullName>
    </recommendedName>
    <component>
        <recommendedName>
            <fullName>Envelope protein E</fullName>
        </recommendedName>
    </component>
    <component>
        <recommendedName>
            <fullName>Non-structural protein 1</fullName>
            <shortName>NS1</shortName>
        </recommendedName>
    </component>
    <component>
        <recommendedName>
            <fullName>Non-structural protein 2A</fullName>
            <shortName>NS2A</shortName>
        </recommendedName>
    </component>
    <component>
        <recommendedName>
            <fullName>Serine protease NS3</fullName>
            <ecNumber>3.4.21.91</ecNumber>
            <ecNumber>3.6.1.15</ecNumber>
            <ecNumber>3.6.4.13</ecNumber>
        </recommendedName>
        <alternativeName>
            <fullName>Non-structural protein 3</fullName>
        </alternativeName>
    </component>
</protein>
<comment type="function">
    <molecule>Envelope protein E</molecule>
    <text evidence="4">Binds to host cell surface receptor and mediates fusion between viral and cellular membranes. Envelope protein is synthesized in the endoplasmic reticulum in the form of heterodimer with protein prM. They play a role in virion budding in the ER, and the newly formed immature particle is covered with 60 spikes composed of heterodimer between precursor prM and envelope protein E. The virion is transported to the Golgi apparatus where the low pH causes dissociation of PrM-E heterodimers and formation of E homodimers. prM-E cleavage is inefficient, and many virions are only partially matured. These uncleaved prM would play a role in immune evasion.</text>
</comment>
<comment type="function">
    <molecule>Non-structural protein 1</molecule>
    <text evidence="6">Involved in immune evasion, pathogenesis and viral replication. Once cleaved off the polyprotein, is targeted to three destinations: the viral replication cycle, the plasma membrane and the extracellular compartment. Essential for viral replication. Required for formation of the replication complex and recruitment of other non-structural proteins to the ER-derived membrane structures. Excreted as a hexameric lipoparticle that plays a role against host immune response. Antagonizing the complement function. Binds to the host macrophages and dendritic cells. Inhibits signal transduction originating from Toll-like receptor 3 (TLR3).</text>
</comment>
<comment type="function">
    <molecule>Non-structural protein 1</molecule>
    <text evidence="4">Disrupts the host endothelial glycocalyx layer of host pulmonary microvascular endothelial cells, inducing degradation of sialic acid and shedding of heparan sulfate proteoglycans. NS1 induces expression of sialidases, heparanase, and activates cathepsin L, which activates heparanase via enzymatic cleavage. These effects are probably linked to the endothelial hyperpermeability observed in severe dengue disease.</text>
</comment>
<comment type="function">
    <molecule>Non-structural protein 2A</molecule>
    <text evidence="4">Component of the viral RNA replication complex that functions in virion assembly and antagonizes the host immune response.</text>
</comment>
<comment type="function">
    <text evidence="4 10">Serine protease subunit NS2B: Required cofactor for the serine protease function of NS3. May have membrane-destabilizing activity and form viroporins (By similarity).</text>
</comment>
<comment type="function">
    <molecule>Serine protease NS3</molecule>
    <text evidence="11">Displays three enzymatic activities: serine protease, NTPase and RNA helicase. NS3 serine protease, in association with NS2B, performs its autocleavage and cleaves the polyprotein at dibasic sites in the cytoplasm: C-prM, NS2A-NS2B, NS2B-NS3, NS3-NS4A, NS4A-2K and NS4B-NS5. NS3 RNA helicase binds RNA and unwinds dsRNA in the 3' to 5' direction.</text>
</comment>
<comment type="catalytic activity">
    <reaction>
        <text>Selective hydrolysis of -Xaa-Xaa-|-Yaa- bonds in which each of the Xaa can be either Arg or Lys and Yaa can be either Ser or Ala.</text>
        <dbReference type="EC" id="3.4.21.91"/>
    </reaction>
</comment>
<comment type="catalytic activity">
    <reaction>
        <text>a ribonucleoside 5'-triphosphate + H2O = a ribonucleoside 5'-diphosphate + phosphate + H(+)</text>
        <dbReference type="Rhea" id="RHEA:23680"/>
        <dbReference type="ChEBI" id="CHEBI:15377"/>
        <dbReference type="ChEBI" id="CHEBI:15378"/>
        <dbReference type="ChEBI" id="CHEBI:43474"/>
        <dbReference type="ChEBI" id="CHEBI:57930"/>
        <dbReference type="ChEBI" id="CHEBI:61557"/>
        <dbReference type="EC" id="3.6.1.15"/>
    </reaction>
</comment>
<comment type="catalytic activity">
    <reaction>
        <text>ATP + H2O = ADP + phosphate + H(+)</text>
        <dbReference type="Rhea" id="RHEA:13065"/>
        <dbReference type="ChEBI" id="CHEBI:15377"/>
        <dbReference type="ChEBI" id="CHEBI:15378"/>
        <dbReference type="ChEBI" id="CHEBI:30616"/>
        <dbReference type="ChEBI" id="CHEBI:43474"/>
        <dbReference type="ChEBI" id="CHEBI:456216"/>
        <dbReference type="EC" id="3.6.4.13"/>
    </reaction>
</comment>
<comment type="subunit">
    <text evidence="4">Capsid protein C: Homodimer. Interacts (via N-terminus) with host EXOC1 (via C-terminus); this interaction results in EXOC1 degradation through the proteasome degradation pathway. Protein prM: Forms heterodimers with envelope protein E in the endoplasmic reticulum and Golgi.</text>
</comment>
<comment type="subunit">
    <molecule>Envelope protein E</molecule>
    <text evidence="4">Homodimer; in the endoplasmic reticulum and Golgi. Interacts with protein prM. Interacts with non-structural protein 1.</text>
</comment>
<comment type="subunit">
    <molecule>Non-structural protein 1</molecule>
    <text evidence="4">Homodimer; Homohexamer when secreted. Interacts with envelope protein E.</text>
</comment>
<comment type="subunit">
    <molecule>Non-structural protein 2A</molecule>
    <text evidence="4">Interacts (via N-terminus) with serine protease NS3. Non-structural protein 2B: Forms a heterodimer with serine protease NS3. May form homooligomers.</text>
</comment>
<comment type="subunit">
    <molecule>Serine protease NS3</molecule>
    <text evidence="4">Forms a heterodimer with NS2B. Interacts with NS4B. Interacts with unphosphorylated RNA-directed RNA polymerase NS5; this interaction stimulates RNA-directed RNA polymerase NS5 guanylyltransferase activity. Interacts with host SHFL.</text>
</comment>
<comment type="subcellular location">
    <molecule>Envelope protein E</molecule>
    <subcellularLocation>
        <location evidence="4">Virion membrane</location>
        <topology evidence="7">Multi-pass membrane protein</topology>
    </subcellularLocation>
    <subcellularLocation>
        <location evidence="4">Host endoplasmic reticulum membrane</location>
        <topology evidence="7">Multi-pass membrane protein</topology>
    </subcellularLocation>
</comment>
<comment type="subcellular location">
    <molecule>Non-structural protein 1</molecule>
    <subcellularLocation>
        <location evidence="4">Secreted</location>
    </subcellularLocation>
    <subcellularLocation>
        <location>Host endoplasmic reticulum membrane</location>
        <topology>Peripheral membrane protein</topology>
        <orientation evidence="4">Lumenal side</orientation>
    </subcellularLocation>
    <text evidence="6">Located in RE-derived vesicles hosting the replication complex.</text>
</comment>
<comment type="subcellular location">
    <molecule>Non-structural protein 2A</molecule>
    <subcellularLocation>
        <location evidence="4">Host endoplasmic reticulum membrane</location>
        <topology evidence="4">Multi-pass membrane protein</topology>
    </subcellularLocation>
</comment>
<comment type="subcellular location">
    <molecule>Serine protease NS3</molecule>
    <subcellularLocation>
        <location evidence="11">Host endoplasmic reticulum membrane</location>
        <topology evidence="11">Peripheral membrane protein</topology>
        <orientation evidence="11">Cytoplasmic side</orientation>
    </subcellularLocation>
    <text evidence="11">Remains non-covalently associated to serine protease subunit NS2B.</text>
</comment>
<comment type="domain">
    <text evidence="4">The transmembrane domains of the small envelope protein M and envelope protein E contain an endoplasmic reticulum retention signal.</text>
</comment>
<comment type="PTM">
    <molecule>Genome polyprotein</molecule>
    <text evidence="4">Specific enzymatic cleavages in vivo yield mature proteins. Cleavages in the lumen of endoplasmic reticulum are performed by host signal peptidase, wereas cleavages in the cytoplasmic side are performed by the Serine protease NS3. Signal cleavage at the 2K-4B site requires a prior NS3 protease-mediated cleavage at the 4A-2K site.</text>
</comment>
<comment type="PTM">
    <molecule>Non-structural protein 1</molecule>
    <text evidence="4">N-glycosylated. The excreted form is glycosylated and this is required for efficient secretion of the protein from infected cells.</text>
</comment>
<comment type="PTM">
    <molecule>Envelope protein E</molecule>
    <text evidence="4">N-glycosylated.</text>
</comment>
<comment type="PTM">
    <molecule>Genome polyprotein</molecule>
    <text evidence="4">Specific enzymatic cleavages in vivo yield mature proteins. Cleavages in the lumen of endoplasmic reticulum are performed by host signal peptidase, wereas cleavages in the cytoplasmic side are performed by serine protease NS3. Signal cleavage at the 2K-4B site requires a prior NS3 protease-mediated cleavage at the 4A-2K site.</text>
</comment>
<organism>
    <name type="scientific">Dengue virus type 2 (strain Tonga/EKB194/1974)</name>
    <name type="common">DENV-2</name>
    <dbReference type="NCBI Taxonomy" id="11067"/>
    <lineage>
        <taxon>Viruses</taxon>
        <taxon>Riboviria</taxon>
        <taxon>Orthornavirae</taxon>
        <taxon>Kitrinoviricota</taxon>
        <taxon>Flasuviricetes</taxon>
        <taxon>Amarillovirales</taxon>
        <taxon>Flaviviridae</taxon>
        <taxon>Orthoflavivirus</taxon>
        <taxon>Orthoflavivirus denguei</taxon>
        <taxon>Dengue virus</taxon>
    </lineage>
</organism>
<evidence type="ECO:0000250" key="1">
    <source>
        <dbReference type="UniProtKB" id="P14335"/>
    </source>
</evidence>
<evidence type="ECO:0000250" key="2">
    <source>
        <dbReference type="UniProtKB" id="P14336"/>
    </source>
</evidence>
<evidence type="ECO:0000250" key="3">
    <source>
        <dbReference type="UniProtKB" id="P14340"/>
    </source>
</evidence>
<evidence type="ECO:0000250" key="4">
    <source>
        <dbReference type="UniProtKB" id="P17763"/>
    </source>
</evidence>
<evidence type="ECO:0000250" key="5">
    <source>
        <dbReference type="UniProtKB" id="P29990"/>
    </source>
</evidence>
<evidence type="ECO:0000250" key="6">
    <source>
        <dbReference type="UniProtKB" id="Q9Q6P4"/>
    </source>
</evidence>
<evidence type="ECO:0000255" key="7"/>
<evidence type="ECO:0000255" key="8">
    <source>
        <dbReference type="PROSITE-ProRule" id="PRU00541"/>
    </source>
</evidence>
<evidence type="ECO:0000255" key="9">
    <source>
        <dbReference type="PROSITE-ProRule" id="PRU00542"/>
    </source>
</evidence>
<evidence type="ECO:0000255" key="10">
    <source>
        <dbReference type="PROSITE-ProRule" id="PRU00859"/>
    </source>
</evidence>
<evidence type="ECO:0000255" key="11">
    <source>
        <dbReference type="PROSITE-ProRule" id="PRU00860"/>
    </source>
</evidence>
<evidence type="ECO:0000305" key="12"/>
<evidence type="ECO:0007829" key="13">
    <source>
        <dbReference type="PDB" id="1TG8"/>
    </source>
</evidence>
<keyword id="KW-0002">3D-structure</keyword>
<keyword id="KW-0067">ATP-binding</keyword>
<keyword id="KW-0167">Capsid protein</keyword>
<keyword id="KW-1165">Clathrin-mediated endocytosis of virus by host</keyword>
<keyword id="KW-0165">Cleavage on pair of basic residues</keyword>
<keyword id="KW-1015">Disulfide bond</keyword>
<keyword id="KW-1170">Fusion of virus membrane with host endosomal membrane</keyword>
<keyword id="KW-1168">Fusion of virus membrane with host membrane</keyword>
<keyword id="KW-0325">Glycoprotein</keyword>
<keyword id="KW-1038">Host endoplasmic reticulum</keyword>
<keyword id="KW-1043">Host membrane</keyword>
<keyword id="KW-0945">Host-virus interaction</keyword>
<keyword id="KW-0378">Hydrolase</keyword>
<keyword id="KW-1090">Inhibition of host innate immune response by virus</keyword>
<keyword id="KW-0472">Membrane</keyword>
<keyword id="KW-0547">Nucleotide-binding</keyword>
<keyword id="KW-0645">Protease</keyword>
<keyword id="KW-0964">Secreted</keyword>
<keyword id="KW-0720">Serine protease</keyword>
<keyword id="KW-0941">Suppressor of RNA silencing</keyword>
<keyword id="KW-0812">Transmembrane</keyword>
<keyword id="KW-1133">Transmembrane helix</keyword>
<keyword id="KW-1161">Viral attachment to host cell</keyword>
<keyword id="KW-0261">Viral envelope protein</keyword>
<keyword id="KW-0899">Viral immunoevasion</keyword>
<keyword id="KW-0543">Viral nucleoprotein</keyword>
<keyword id="KW-1162">Viral penetration into host cytoplasm</keyword>
<keyword id="KW-0946">Virion</keyword>
<keyword id="KW-1164">Virus endocytosis by host</keyword>
<keyword id="KW-1160">Virus entry into host cell</keyword>
<keyword id="KW-0862">Zinc</keyword>
<name>POLG_DEN2T</name>
<sequence length="1683" mass="187440">MRCIGISNRDFVEGVSGGSWVDIVLEHGSCVTTMAKNKPTLDFELIKTEAKQPATLRKYCIEAKLTNTTTDSRCPTQGEPTLNEEQDKRFVCKHSMVDRGWGNGCGLFGKGGIVTCAMFTCKKNMEGKIVQPENLEYTVVITPHSGEEHAVGNDTGKHGKEVKITPQSSITEAELTGYGTVTMECSPRTGLDFNEMVLLQMEDKAWLVHRQWFLDLPLPWLPGADTQGSNWIQKETLVTFKNPHAKKQDVVVLGSQEGAMHTALTGATEIQMSSGNLLFTGHLKCRLRMDKLQLKGMSYSMCTGKFKIVKEIAETQHGTIVIRVQYEGDGSPCKIPFEIMDLEKRHVLGRLITVNPIVTEKDSPVNIEAEPPFGDSYIIIGVEPGQLKLDWFKKGSSIGQMFETTMRGAKRMAILGDTAWDFGSLGGVFTSIGKALHQVFGAIYGAAFSGVSWTMKILIGVIITWIGMNSRSTSLSVSLVLVGIVTLYLGVMVQADSGCVVSWKNKELKCGSGIFVTDNVHTWTEQYKFQPESPSKLASAIQKAHEEGICGIRSVTRLENLMWKQITSELNHILSENEVKLTIMTGDIKGIMQVGKRSLRPQPTELRYSWKTWGKAKMLSTELHNQTFLIDGPETAECPNTNRAWNSLEVEDYGFGVFTTNIWLRLREKQDVFCDSKLMSAAIKDNRAVHADMGYWIESALNDTWKIEKASFIEVKSCHWPKSHTLWSNGVLESEMVIPKNFAGPVSQHNNRPGYYTQTAGPWHLGKLEMDFDFCEGTTVVVTEDCGNRGPSLRTTTASGKLITEWCCRSCTLPPLRYRGEDGCWYGMEIRPLKEKEENLVSSLVTAGHGQIDNFSLGILGMALFLEEMLRTRVGTKHAILLVAVSFVTLITGNMSFRDLGRVMVMVGATMTDDIGMGVTYLALLAAFRVRPTFAAGLLLRKLTSKELMMTTIGIVLLSQSSIPETILELTDALALGMMVLKMVRNMEKYQLAVTIMAILCVPNAVILQNAWKVSCTILAVVSVSPLLLTSSQQKADWIPLALTIKGLNPTAIFLTTLSRTSKKRAGVLWDVPSPPPVGKAELEDGAYRIKQKGILGYSQIGAGVYKEGTFHTMWHVTRGAVLMHKGKRIEPSWADVKKDLISYGGGWKLEGEWKEGEEVQVLALEPGKNPRAVQTKPGLFRTNTGTIGAVSLDFSPGTSGSPIVDKKGKVVGLYGNGVVTRSGAYVSAIAQTEKSIEDNPEIEDDIFRKRRLTIMDLHPGAGKTKRYLPAIVREAIKRGLRTLILAPTRVVAAEMEEALRGLPIRYQTPAIRAEHTGREIVDLMCHATFTMRLLSPIRVPNYNLIIMDEAHFTDPASIAARGYISTRVEMGEAAGIFMTATPPGSRDPFPQSNAPIMDEEREIPERSWNSGHEWVTDFKGKTVWFVPSIKTGNDIAACLRKNGKRVIQLSRKTFDSEYVKTRTNDWDFVVTTDISEMGANFKAERVIDPRRCMKPVILTDGEERVILAGPMPVTHSSAAQRRGRIGRNPRNENDQYIYMGEPLENDEDCAHWKEAKMLLDNINTPEGIIPSIFEPEREKVDAIDGEYRLRGEARKTFVDLMRRGDLPVWLAYKVAAEGINYADRRWCFDGTRNNQILEENVEVEIWTKEGERKKLKPRWLDARIYSDPLALKEFKEFAAGRK</sequence>
<proteinExistence type="evidence at protein level"/>